<sequence length="379" mass="42760">MTNIRKSHPLAKIINESFIDLPAPSNISAWWNFGSLLGVCLILQILTGLFLAMHYTADTMTAFSSVTHICRDVNYGWIIRYMHANGASMFFICLFMHVGRGMYYGSYTFSETWNIGILLLFTVMATAFMGYVLPWGQMSFWGATVITNLLSAIPYIGTNLVEWIWGGFSVDKATLTRFFAFHFILPFIISALAAVHLLFLHETGSNNPSGVVSDSDKIPFHPYYTIKDILGLLLLILTLMLLVLFSPDLLGDPDNYTPANPLNTPPHIKPEWYFLFAYAILRSIPNKLGGVLALILSILILAIIPLLHTSKQRSMMFRPLSQCLFWFLVADLLTLTWIGGQPVEHPFITIGQLASIFYFSILLILMPIFGTIENRLLKW</sequence>
<name>CYB_VIVZI</name>
<protein>
    <recommendedName>
        <fullName>Cytochrome b</fullName>
    </recommendedName>
    <alternativeName>
        <fullName>Complex III subunit 3</fullName>
    </alternativeName>
    <alternativeName>
        <fullName>Complex III subunit III</fullName>
    </alternativeName>
    <alternativeName>
        <fullName>Cytochrome b-c1 complex subunit 3</fullName>
    </alternativeName>
    <alternativeName>
        <fullName>Ubiquinol-cytochrome-c reductase complex cytochrome b subunit</fullName>
    </alternativeName>
</protein>
<gene>
    <name type="primary">MT-CYB</name>
    <name type="synonym">COB</name>
    <name type="synonym">CYTB</name>
    <name type="synonym">MTCYB</name>
</gene>
<proteinExistence type="inferred from homology"/>
<comment type="function">
    <text evidence="2">Component of the ubiquinol-cytochrome c reductase complex (complex III or cytochrome b-c1 complex) that is part of the mitochondrial respiratory chain. The b-c1 complex mediates electron transfer from ubiquinol to cytochrome c. Contributes to the generation of a proton gradient across the mitochondrial membrane that is then used for ATP synthesis.</text>
</comment>
<comment type="cofactor">
    <cofactor evidence="2">
        <name>heme b</name>
        <dbReference type="ChEBI" id="CHEBI:60344"/>
    </cofactor>
    <text evidence="2">Binds 2 heme b groups non-covalently.</text>
</comment>
<comment type="subunit">
    <text evidence="2">The cytochrome bc1 complex contains 11 subunits: 3 respiratory subunits (MT-CYB, CYC1 and UQCRFS1), 2 core proteins (UQCRC1 and UQCRC2) and 6 low-molecular weight proteins (UQCRH/QCR6, UQCRB/QCR7, UQCRQ/QCR8, UQCR10/QCR9, UQCR11/QCR10 and a cleavage product of UQCRFS1). This cytochrome bc1 complex then forms a dimer.</text>
</comment>
<comment type="subcellular location">
    <subcellularLocation>
        <location evidence="2">Mitochondrion inner membrane</location>
        <topology evidence="2">Multi-pass membrane protein</topology>
    </subcellularLocation>
</comment>
<comment type="miscellaneous">
    <text evidence="1">Heme 1 (or BL or b562) is low-potential and absorbs at about 562 nm, and heme 2 (or BH or b566) is high-potential and absorbs at about 566 nm.</text>
</comment>
<comment type="similarity">
    <text evidence="3 4">Belongs to the cytochrome b family.</text>
</comment>
<comment type="caution">
    <text evidence="2">The full-length protein contains only eight transmembrane helices, not nine as predicted by bioinformatics tools.</text>
</comment>
<keyword id="KW-0249">Electron transport</keyword>
<keyword id="KW-0349">Heme</keyword>
<keyword id="KW-0408">Iron</keyword>
<keyword id="KW-0472">Membrane</keyword>
<keyword id="KW-0479">Metal-binding</keyword>
<keyword id="KW-0496">Mitochondrion</keyword>
<keyword id="KW-0999">Mitochondrion inner membrane</keyword>
<keyword id="KW-0679">Respiratory chain</keyword>
<keyword id="KW-0812">Transmembrane</keyword>
<keyword id="KW-1133">Transmembrane helix</keyword>
<keyword id="KW-0813">Transport</keyword>
<keyword id="KW-0830">Ubiquinone</keyword>
<evidence type="ECO:0000250" key="1"/>
<evidence type="ECO:0000250" key="2">
    <source>
        <dbReference type="UniProtKB" id="P00157"/>
    </source>
</evidence>
<evidence type="ECO:0000255" key="3">
    <source>
        <dbReference type="PROSITE-ProRule" id="PRU00967"/>
    </source>
</evidence>
<evidence type="ECO:0000255" key="4">
    <source>
        <dbReference type="PROSITE-ProRule" id="PRU00968"/>
    </source>
</evidence>
<accession>Q71FI8</accession>
<feature type="chain" id="PRO_0000061722" description="Cytochrome b">
    <location>
        <begin position="1"/>
        <end position="379"/>
    </location>
</feature>
<feature type="transmembrane region" description="Helical" evidence="2">
    <location>
        <begin position="33"/>
        <end position="53"/>
    </location>
</feature>
<feature type="transmembrane region" description="Helical" evidence="2">
    <location>
        <begin position="77"/>
        <end position="98"/>
    </location>
</feature>
<feature type="transmembrane region" description="Helical" evidence="2">
    <location>
        <begin position="113"/>
        <end position="133"/>
    </location>
</feature>
<feature type="transmembrane region" description="Helical" evidence="2">
    <location>
        <begin position="178"/>
        <end position="198"/>
    </location>
</feature>
<feature type="transmembrane region" description="Helical" evidence="2">
    <location>
        <begin position="226"/>
        <end position="246"/>
    </location>
</feature>
<feature type="transmembrane region" description="Helical" evidence="2">
    <location>
        <begin position="288"/>
        <end position="308"/>
    </location>
</feature>
<feature type="transmembrane region" description="Helical" evidence="2">
    <location>
        <begin position="320"/>
        <end position="340"/>
    </location>
</feature>
<feature type="transmembrane region" description="Helical" evidence="2">
    <location>
        <begin position="347"/>
        <end position="367"/>
    </location>
</feature>
<feature type="binding site" description="axial binding residue" evidence="2">
    <location>
        <position position="83"/>
    </location>
    <ligand>
        <name>heme b</name>
        <dbReference type="ChEBI" id="CHEBI:60344"/>
        <label>b562</label>
    </ligand>
    <ligandPart>
        <name>Fe</name>
        <dbReference type="ChEBI" id="CHEBI:18248"/>
    </ligandPart>
</feature>
<feature type="binding site" description="axial binding residue" evidence="2">
    <location>
        <position position="97"/>
    </location>
    <ligand>
        <name>heme b</name>
        <dbReference type="ChEBI" id="CHEBI:60344"/>
        <label>b566</label>
    </ligand>
    <ligandPart>
        <name>Fe</name>
        <dbReference type="ChEBI" id="CHEBI:18248"/>
    </ligandPart>
</feature>
<feature type="binding site" description="axial binding residue" evidence="2">
    <location>
        <position position="182"/>
    </location>
    <ligand>
        <name>heme b</name>
        <dbReference type="ChEBI" id="CHEBI:60344"/>
        <label>b562</label>
    </ligand>
    <ligandPart>
        <name>Fe</name>
        <dbReference type="ChEBI" id="CHEBI:18248"/>
    </ligandPart>
</feature>
<feature type="binding site" description="axial binding residue" evidence="2">
    <location>
        <position position="196"/>
    </location>
    <ligand>
        <name>heme b</name>
        <dbReference type="ChEBI" id="CHEBI:60344"/>
        <label>b566</label>
    </ligand>
    <ligandPart>
        <name>Fe</name>
        <dbReference type="ChEBI" id="CHEBI:18248"/>
    </ligandPart>
</feature>
<feature type="binding site" evidence="2">
    <location>
        <position position="201"/>
    </location>
    <ligand>
        <name>a ubiquinone</name>
        <dbReference type="ChEBI" id="CHEBI:16389"/>
    </ligand>
</feature>
<dbReference type="EMBL" id="AF511047">
    <property type="protein sequence ID" value="AAQ08023.1"/>
    <property type="molecule type" value="Genomic_DNA"/>
</dbReference>
<dbReference type="SMR" id="Q71FI8"/>
<dbReference type="GO" id="GO:0005743">
    <property type="term" value="C:mitochondrial inner membrane"/>
    <property type="evidence" value="ECO:0007669"/>
    <property type="project" value="UniProtKB-SubCell"/>
</dbReference>
<dbReference type="GO" id="GO:0045275">
    <property type="term" value="C:respiratory chain complex III"/>
    <property type="evidence" value="ECO:0007669"/>
    <property type="project" value="InterPro"/>
</dbReference>
<dbReference type="GO" id="GO:0046872">
    <property type="term" value="F:metal ion binding"/>
    <property type="evidence" value="ECO:0007669"/>
    <property type="project" value="UniProtKB-KW"/>
</dbReference>
<dbReference type="GO" id="GO:0008121">
    <property type="term" value="F:ubiquinol-cytochrome-c reductase activity"/>
    <property type="evidence" value="ECO:0007669"/>
    <property type="project" value="InterPro"/>
</dbReference>
<dbReference type="GO" id="GO:0006122">
    <property type="term" value="P:mitochondrial electron transport, ubiquinol to cytochrome c"/>
    <property type="evidence" value="ECO:0007669"/>
    <property type="project" value="TreeGrafter"/>
</dbReference>
<dbReference type="CDD" id="cd00290">
    <property type="entry name" value="cytochrome_b_C"/>
    <property type="match status" value="1"/>
</dbReference>
<dbReference type="CDD" id="cd00284">
    <property type="entry name" value="Cytochrome_b_N"/>
    <property type="match status" value="1"/>
</dbReference>
<dbReference type="FunFam" id="1.20.810.10:FF:000002">
    <property type="entry name" value="Cytochrome b"/>
    <property type="match status" value="1"/>
</dbReference>
<dbReference type="Gene3D" id="1.20.810.10">
    <property type="entry name" value="Cytochrome Bc1 Complex, Chain C"/>
    <property type="match status" value="1"/>
</dbReference>
<dbReference type="InterPro" id="IPR005798">
    <property type="entry name" value="Cyt_b/b6_C"/>
</dbReference>
<dbReference type="InterPro" id="IPR036150">
    <property type="entry name" value="Cyt_b/b6_C_sf"/>
</dbReference>
<dbReference type="InterPro" id="IPR005797">
    <property type="entry name" value="Cyt_b/b6_N"/>
</dbReference>
<dbReference type="InterPro" id="IPR027387">
    <property type="entry name" value="Cytb/b6-like_sf"/>
</dbReference>
<dbReference type="InterPro" id="IPR030689">
    <property type="entry name" value="Cytochrome_b"/>
</dbReference>
<dbReference type="InterPro" id="IPR048260">
    <property type="entry name" value="Cytochrome_b_C_euk/bac"/>
</dbReference>
<dbReference type="InterPro" id="IPR048259">
    <property type="entry name" value="Cytochrome_b_N_euk/bac"/>
</dbReference>
<dbReference type="InterPro" id="IPR016174">
    <property type="entry name" value="Di-haem_cyt_TM"/>
</dbReference>
<dbReference type="PANTHER" id="PTHR19271">
    <property type="entry name" value="CYTOCHROME B"/>
    <property type="match status" value="1"/>
</dbReference>
<dbReference type="PANTHER" id="PTHR19271:SF16">
    <property type="entry name" value="CYTOCHROME B"/>
    <property type="match status" value="1"/>
</dbReference>
<dbReference type="Pfam" id="PF00032">
    <property type="entry name" value="Cytochrom_B_C"/>
    <property type="match status" value="1"/>
</dbReference>
<dbReference type="Pfam" id="PF00033">
    <property type="entry name" value="Cytochrome_B"/>
    <property type="match status" value="1"/>
</dbReference>
<dbReference type="PIRSF" id="PIRSF038885">
    <property type="entry name" value="COB"/>
    <property type="match status" value="1"/>
</dbReference>
<dbReference type="SUPFAM" id="SSF81648">
    <property type="entry name" value="a domain/subunit of cytochrome bc1 complex (Ubiquinol-cytochrome c reductase)"/>
    <property type="match status" value="1"/>
</dbReference>
<dbReference type="SUPFAM" id="SSF81342">
    <property type="entry name" value="Transmembrane di-heme cytochromes"/>
    <property type="match status" value="1"/>
</dbReference>
<dbReference type="PROSITE" id="PS51003">
    <property type="entry name" value="CYTB_CTER"/>
    <property type="match status" value="1"/>
</dbReference>
<dbReference type="PROSITE" id="PS51002">
    <property type="entry name" value="CYTB_NTER"/>
    <property type="match status" value="1"/>
</dbReference>
<organism>
    <name type="scientific">Viverra zibetha</name>
    <name type="common">Large Indian civet</name>
    <dbReference type="NCBI Taxonomy" id="94178"/>
    <lineage>
        <taxon>Eukaryota</taxon>
        <taxon>Metazoa</taxon>
        <taxon>Chordata</taxon>
        <taxon>Craniata</taxon>
        <taxon>Vertebrata</taxon>
        <taxon>Euteleostomi</taxon>
        <taxon>Mammalia</taxon>
        <taxon>Eutheria</taxon>
        <taxon>Laurasiatheria</taxon>
        <taxon>Carnivora</taxon>
        <taxon>Feliformia</taxon>
        <taxon>Viverridae</taxon>
        <taxon>Viverrinae</taxon>
        <taxon>Viverra</taxon>
    </lineage>
</organism>
<reference key="1">
    <citation type="journal article" date="2004" name="Zool. Scr.">
        <title>First molecular evidence for reassessing phylogenetic affinities between genets (Genetta) and the enigmatic genet-like taxa Osbornictis, Poiana and Prionodon (Carnivora, Viverridae).</title>
        <authorList>
            <person name="Gaubert P."/>
            <person name="Tranier M."/>
            <person name="Delmas A.-S."/>
            <person name="Colyn M."/>
            <person name="Veron G."/>
        </authorList>
    </citation>
    <scope>NUCLEOTIDE SEQUENCE [GENOMIC DNA]</scope>
    <source>
        <strain>Isolate C-183</strain>
    </source>
</reference>
<geneLocation type="mitochondrion"/>